<comment type="similarity">
    <text evidence="1">Belongs to the elongation factor P family.</text>
</comment>
<comment type="sequence caution" evidence="2">
    <conflict type="erroneous initiation">
        <sequence resource="EMBL-CDS" id="ABB61084"/>
    </conflict>
</comment>
<reference key="1">
    <citation type="journal article" date="2005" name="Nucleic Acids Res.">
        <title>Genome dynamics and diversity of Shigella species, the etiologic agents of bacillary dysentery.</title>
        <authorList>
            <person name="Yang F."/>
            <person name="Yang J."/>
            <person name="Zhang X."/>
            <person name="Chen L."/>
            <person name="Jiang Y."/>
            <person name="Yan Y."/>
            <person name="Tang X."/>
            <person name="Wang J."/>
            <person name="Xiong Z."/>
            <person name="Dong J."/>
            <person name="Xue Y."/>
            <person name="Zhu Y."/>
            <person name="Xu X."/>
            <person name="Sun L."/>
            <person name="Chen S."/>
            <person name="Nie H."/>
            <person name="Peng J."/>
            <person name="Xu J."/>
            <person name="Wang Y."/>
            <person name="Yuan Z."/>
            <person name="Wen Y."/>
            <person name="Yao Z."/>
            <person name="Shen Y."/>
            <person name="Qiang B."/>
            <person name="Hou Y."/>
            <person name="Yu J."/>
            <person name="Jin Q."/>
        </authorList>
    </citation>
    <scope>NUCLEOTIDE SEQUENCE [LARGE SCALE GENOMIC DNA]</scope>
    <source>
        <strain>Sd197</strain>
    </source>
</reference>
<protein>
    <recommendedName>
        <fullName evidence="1">Elongation factor P-like protein</fullName>
    </recommendedName>
</protein>
<accession>Q32HX1</accession>
<name>EFPL_SHIDS</name>
<sequence length="190" mass="21533">MPRANEIKKGMVLNYNGKLLLVKDIDIQSPTARGAATLYKMRFSDVRTGLKVEERFKGDDIVDTVTLTRRYVDFSYVDGNEYVFMDKEDYTPYTFTKDQIEEELLFMPEGGMPDMQVLTWDGQLLALELPQTVDLEIVETAPGIKGASASARNKPATLSTGLVIQVPEYLSPGEKIRIHIEERRYMGRAD</sequence>
<proteinExistence type="inferred from homology"/>
<dbReference type="EMBL" id="CP000034">
    <property type="protein sequence ID" value="ABB61084.1"/>
    <property type="status" value="ALT_INIT"/>
    <property type="molecule type" value="Genomic_DNA"/>
</dbReference>
<dbReference type="RefSeq" id="WP_001136827.1">
    <property type="nucleotide sequence ID" value="NC_007606.1"/>
</dbReference>
<dbReference type="RefSeq" id="YP_402575.2">
    <property type="nucleotide sequence ID" value="NC_007606.1"/>
</dbReference>
<dbReference type="SMR" id="Q32HX1"/>
<dbReference type="STRING" id="300267.SDY_0908"/>
<dbReference type="EnsemblBacteria" id="ABB61084">
    <property type="protein sequence ID" value="ABB61084"/>
    <property type="gene ID" value="SDY_0908"/>
</dbReference>
<dbReference type="GeneID" id="93775010"/>
<dbReference type="KEGG" id="sdy:SDY_0908"/>
<dbReference type="PATRIC" id="fig|300267.13.peg.1049"/>
<dbReference type="HOGENOM" id="CLU_074944_2_0_6"/>
<dbReference type="Proteomes" id="UP000002716">
    <property type="component" value="Chromosome"/>
</dbReference>
<dbReference type="GO" id="GO:0005829">
    <property type="term" value="C:cytosol"/>
    <property type="evidence" value="ECO:0007669"/>
    <property type="project" value="UniProtKB-ARBA"/>
</dbReference>
<dbReference type="GO" id="GO:0003746">
    <property type="term" value="F:translation elongation factor activity"/>
    <property type="evidence" value="ECO:0007669"/>
    <property type="project" value="UniProtKB-UniRule"/>
</dbReference>
<dbReference type="GO" id="GO:0043043">
    <property type="term" value="P:peptide biosynthetic process"/>
    <property type="evidence" value="ECO:0007669"/>
    <property type="project" value="InterPro"/>
</dbReference>
<dbReference type="CDD" id="cd04470">
    <property type="entry name" value="S1_EF-P_repeat_1"/>
    <property type="match status" value="1"/>
</dbReference>
<dbReference type="CDD" id="cd05794">
    <property type="entry name" value="S1_EF-P_repeat_2"/>
    <property type="match status" value="1"/>
</dbReference>
<dbReference type="FunFam" id="2.40.50.140:FF:000004">
    <property type="entry name" value="Elongation factor P"/>
    <property type="match status" value="1"/>
</dbReference>
<dbReference type="FunFam" id="2.30.30.30:FF:000011">
    <property type="entry name" value="Elongation factor P-like protein"/>
    <property type="match status" value="1"/>
</dbReference>
<dbReference type="FunFam" id="2.40.50.140:FF:000053">
    <property type="entry name" value="Elongation factor P-like protein"/>
    <property type="match status" value="1"/>
</dbReference>
<dbReference type="Gene3D" id="2.30.30.30">
    <property type="match status" value="1"/>
</dbReference>
<dbReference type="Gene3D" id="2.40.50.140">
    <property type="entry name" value="Nucleic acid-binding proteins"/>
    <property type="match status" value="2"/>
</dbReference>
<dbReference type="HAMAP" id="MF_00646">
    <property type="entry name" value="EFP"/>
    <property type="match status" value="1"/>
</dbReference>
<dbReference type="InterPro" id="IPR015365">
    <property type="entry name" value="Elong-fact-P_C"/>
</dbReference>
<dbReference type="InterPro" id="IPR012340">
    <property type="entry name" value="NA-bd_OB-fold"/>
</dbReference>
<dbReference type="InterPro" id="IPR014722">
    <property type="entry name" value="Rib_uL2_dom2"/>
</dbReference>
<dbReference type="InterPro" id="IPR020599">
    <property type="entry name" value="Transl_elong_fac_P/YeiP"/>
</dbReference>
<dbReference type="InterPro" id="IPR013185">
    <property type="entry name" value="Transl_elong_KOW-like"/>
</dbReference>
<dbReference type="InterPro" id="IPR011897">
    <property type="entry name" value="Transl_elong_p-like_YeiP"/>
</dbReference>
<dbReference type="InterPro" id="IPR001059">
    <property type="entry name" value="Transl_elong_P/YeiP_cen"/>
</dbReference>
<dbReference type="InterPro" id="IPR013852">
    <property type="entry name" value="Transl_elong_P/YeiP_CS"/>
</dbReference>
<dbReference type="InterPro" id="IPR008991">
    <property type="entry name" value="Translation_prot_SH3-like_sf"/>
</dbReference>
<dbReference type="NCBIfam" id="NF001810">
    <property type="entry name" value="PRK00529.1"/>
    <property type="match status" value="1"/>
</dbReference>
<dbReference type="NCBIfam" id="NF003392">
    <property type="entry name" value="PRK04542.1"/>
    <property type="match status" value="1"/>
</dbReference>
<dbReference type="NCBIfam" id="TIGR02178">
    <property type="entry name" value="yeiP"/>
    <property type="match status" value="1"/>
</dbReference>
<dbReference type="PANTHER" id="PTHR30053">
    <property type="entry name" value="ELONGATION FACTOR P"/>
    <property type="match status" value="1"/>
</dbReference>
<dbReference type="PANTHER" id="PTHR30053:SF14">
    <property type="entry name" value="TRANSLATION ELONGATION FACTOR KOW-LIKE DOMAIN-CONTAINING PROTEIN"/>
    <property type="match status" value="1"/>
</dbReference>
<dbReference type="Pfam" id="PF01132">
    <property type="entry name" value="EFP"/>
    <property type="match status" value="1"/>
</dbReference>
<dbReference type="Pfam" id="PF08207">
    <property type="entry name" value="EFP_N"/>
    <property type="match status" value="1"/>
</dbReference>
<dbReference type="Pfam" id="PF09285">
    <property type="entry name" value="Elong-fact-P_C"/>
    <property type="match status" value="1"/>
</dbReference>
<dbReference type="PIRSF" id="PIRSF005901">
    <property type="entry name" value="EF-P"/>
    <property type="match status" value="1"/>
</dbReference>
<dbReference type="SMART" id="SM01185">
    <property type="entry name" value="EFP"/>
    <property type="match status" value="1"/>
</dbReference>
<dbReference type="SMART" id="SM00841">
    <property type="entry name" value="Elong-fact-P_C"/>
    <property type="match status" value="1"/>
</dbReference>
<dbReference type="SUPFAM" id="SSF50249">
    <property type="entry name" value="Nucleic acid-binding proteins"/>
    <property type="match status" value="2"/>
</dbReference>
<dbReference type="SUPFAM" id="SSF50104">
    <property type="entry name" value="Translation proteins SH3-like domain"/>
    <property type="match status" value="1"/>
</dbReference>
<dbReference type="PROSITE" id="PS01275">
    <property type="entry name" value="EFP"/>
    <property type="match status" value="1"/>
</dbReference>
<gene>
    <name evidence="1" type="primary">yeiP</name>
    <name type="ordered locus">SDY_0908</name>
</gene>
<organism>
    <name type="scientific">Shigella dysenteriae serotype 1 (strain Sd197)</name>
    <dbReference type="NCBI Taxonomy" id="300267"/>
    <lineage>
        <taxon>Bacteria</taxon>
        <taxon>Pseudomonadati</taxon>
        <taxon>Pseudomonadota</taxon>
        <taxon>Gammaproteobacteria</taxon>
        <taxon>Enterobacterales</taxon>
        <taxon>Enterobacteriaceae</taxon>
        <taxon>Shigella</taxon>
    </lineage>
</organism>
<feature type="chain" id="PRO_0000259901" description="Elongation factor P-like protein">
    <location>
        <begin position="1"/>
        <end position="190"/>
    </location>
</feature>
<keyword id="KW-1185">Reference proteome</keyword>
<evidence type="ECO:0000255" key="1">
    <source>
        <dbReference type="HAMAP-Rule" id="MF_00646"/>
    </source>
</evidence>
<evidence type="ECO:0000305" key="2"/>